<sequence length="365" mass="41385">MAVYVVTGKLGAGKTLVAVSRIQRTLAKGGIVATNLNLKLHHFPQVGRYAKQCRVMRIADKPTLEDLEAIGRGNLSYDESKNGLIVLDECGTWFNSRNWSDKSRQPVIDWFLHARKLGWDVIFIIQDISLMDKQAREALAEHVVYCRRLDKLNIPIIGGLISVLSGGRLPLPKVHFGIVKYGDNPQSLTVDKWIYTGTDLYAAYDTKQIFTSDRELSPPFCPVSPYYTHGIFAVKRDAKYYMRMTKIYFKKMNRVWLMASFLALGAGVGFFYKSRQINEQLSNMPVASAQANTTKTDHTIDELPRLSINSFAQMGYDVNVSFKDAKGKIYYSFDLMKSGYALDIKDSCHITLRKRNYIQQVTCEG</sequence>
<dbReference type="EMBL" id="X14336">
    <property type="protein sequence ID" value="CAA32519.1"/>
    <property type="molecule type" value="Genomic_DNA"/>
</dbReference>
<dbReference type="PIR" id="S08092">
    <property type="entry name" value="S08092"/>
</dbReference>
<dbReference type="RefSeq" id="NP_039622.1">
    <molecule id="P15418-1"/>
    <property type="nucleotide sequence ID" value="NC_001332.1"/>
</dbReference>
<dbReference type="GeneID" id="1260724"/>
<dbReference type="KEGG" id="vg:1260724"/>
<dbReference type="OrthoDB" id="9125at10239"/>
<dbReference type="Proteomes" id="UP000000373">
    <property type="component" value="Genome"/>
</dbReference>
<dbReference type="GO" id="GO:0033644">
    <property type="term" value="C:host cell membrane"/>
    <property type="evidence" value="ECO:0007669"/>
    <property type="project" value="UniProtKB-SubCell"/>
</dbReference>
<dbReference type="GO" id="GO:0016020">
    <property type="term" value="C:membrane"/>
    <property type="evidence" value="ECO:0007669"/>
    <property type="project" value="UniProtKB-KW"/>
</dbReference>
<dbReference type="GO" id="GO:0005524">
    <property type="term" value="F:ATP binding"/>
    <property type="evidence" value="ECO:0007669"/>
    <property type="project" value="UniProtKB-KW"/>
</dbReference>
<dbReference type="GO" id="GO:0099045">
    <property type="term" value="P:viral extrusion"/>
    <property type="evidence" value="ECO:0007669"/>
    <property type="project" value="UniProtKB-KW"/>
</dbReference>
<dbReference type="Gene3D" id="3.40.50.300">
    <property type="entry name" value="P-loop containing nucleotide triphosphate hydrolases"/>
    <property type="match status" value="1"/>
</dbReference>
<dbReference type="InterPro" id="IPR027417">
    <property type="entry name" value="P-loop_NTPase"/>
</dbReference>
<dbReference type="InterPro" id="IPR008900">
    <property type="entry name" value="Zot_N"/>
</dbReference>
<dbReference type="Pfam" id="PF05707">
    <property type="entry name" value="Zot"/>
    <property type="match status" value="1"/>
</dbReference>
<dbReference type="SUPFAM" id="SSF52540">
    <property type="entry name" value="P-loop containing nucleoside triphosphate hydrolases"/>
    <property type="match status" value="1"/>
</dbReference>
<proteinExistence type="inferred from homology"/>
<evidence type="ECO:0000250" key="1"/>
<evidence type="ECO:0000255" key="2"/>
<evidence type="ECO:0000305" key="3"/>
<organismHost>
    <name type="scientific">Escherichia coli</name>
    <dbReference type="NCBI Taxonomy" id="562"/>
</organismHost>
<name>G1P_BPI22</name>
<reference key="1">
    <citation type="journal article" date="1992" name="J. Mol. Evol.">
        <title>Nucleotide sequence of the genome of the filamentous bacteriophage I2-2: module evolution of the filamentous phage genome.</title>
        <authorList>
            <person name="Stassen A.P."/>
            <person name="Schonmakers E.F."/>
            <person name="Yu M."/>
            <person name="Schoenmakers J.G."/>
            <person name="Konings R.N.H."/>
        </authorList>
    </citation>
    <scope>NUCLEOTIDE SEQUENCE [GENOMIC DNA]</scope>
</reference>
<feature type="chain" id="PRO_0000098203" description="Gene 1 protein">
    <location>
        <begin position="1"/>
        <end position="365"/>
    </location>
</feature>
<feature type="transmembrane region" description="Helical" evidence="2">
    <location>
        <begin position="255"/>
        <end position="272"/>
    </location>
</feature>
<feature type="binding site" evidence="2">
    <location>
        <begin position="8"/>
        <end position="15"/>
    </location>
    <ligand>
        <name>ATP</name>
        <dbReference type="ChEBI" id="CHEBI:30616"/>
    </ligand>
</feature>
<feature type="splice variant" id="VSP_037571" description="In isoform G11P." evidence="3">
    <location>
        <begin position="1"/>
        <end position="241"/>
    </location>
</feature>
<protein>
    <recommendedName>
        <fullName>Gene 1 protein</fullName>
    </recommendedName>
    <alternativeName>
        <fullName>G1P</fullName>
    </alternativeName>
</protein>
<accession>P15418</accession>
<comment type="function">
    <text evidence="1">Isoform G1P plays an essential role in phage assembly. It is required to increase the number of adhesion zones between the inner and outer membranes of the host cell. The extrusion of neo-synthesized phages occurs at these adhesion sites. May be involved with G4P in creating zone through which the phage assembled and extruded (By similarity).</text>
</comment>
<comment type="function">
    <text evidence="1">Isoform G11P is also involved in phage assembly, probably playing a structural role in the formation of the phage assembly site.</text>
</comment>
<comment type="subunit">
    <text evidence="1">Interacts with G4P; this interaction results in a complex that spans the inner an outer host membranes.</text>
</comment>
<comment type="subcellular location">
    <subcellularLocation>
        <location evidence="3">Host membrane</location>
        <topology evidence="3">Single-pass membrane protein</topology>
    </subcellularLocation>
</comment>
<comment type="alternative products">
    <event type="alternative initiation"/>
    <isoform>
        <id>P15418-1</id>
        <name>G1P</name>
        <name>Gene 1 protein</name>
        <sequence type="displayed"/>
    </isoform>
    <isoform>
        <id>P15418-2</id>
        <name>G11P</name>
        <name>Gene 11 protein</name>
        <sequence type="described" ref="VSP_037571"/>
    </isoform>
</comment>
<comment type="similarity">
    <text evidence="3">Belongs to the inovirus G1P protein family.</text>
</comment>
<gene>
    <name type="primary">I</name>
</gene>
<organism>
    <name type="scientific">Enterobacteria phage I2-2</name>
    <name type="common">Bacteriophage I2-2</name>
    <dbReference type="NCBI Taxonomy" id="10869"/>
    <lineage>
        <taxon>Viruses</taxon>
        <taxon>Monodnaviria</taxon>
        <taxon>Loebvirae</taxon>
        <taxon>Hofneiviricota</taxon>
        <taxon>Faserviricetes</taxon>
        <taxon>Tubulavirales</taxon>
        <taxon>Inoviridae</taxon>
        <taxon>Lineavirus</taxon>
    </lineage>
</organism>
<keyword id="KW-0024">Alternative initiation</keyword>
<keyword id="KW-0067">ATP-binding</keyword>
<keyword id="KW-1043">Host membrane</keyword>
<keyword id="KW-0472">Membrane</keyword>
<keyword id="KW-0547">Nucleotide-binding</keyword>
<keyword id="KW-1185">Reference proteome</keyword>
<keyword id="KW-0812">Transmembrane</keyword>
<keyword id="KW-1133">Transmembrane helix</keyword>
<keyword id="KW-1249">Viral extrusion</keyword>
<keyword id="KW-1188">Viral release from host cell</keyword>